<dbReference type="EC" id="3.6.4.-" evidence="1"/>
<dbReference type="EMBL" id="CP000235">
    <property type="protein sequence ID" value="ABD44330.1"/>
    <property type="molecule type" value="Genomic_DNA"/>
</dbReference>
<dbReference type="SMR" id="Q2GLG1"/>
<dbReference type="STRING" id="212042.APH_0166"/>
<dbReference type="PaxDb" id="212042-APH_0166"/>
<dbReference type="EnsemblBacteria" id="ABD44330">
    <property type="protein sequence ID" value="ABD44330"/>
    <property type="gene ID" value="APH_0166"/>
</dbReference>
<dbReference type="KEGG" id="aph:APH_0166"/>
<dbReference type="eggNOG" id="COG2255">
    <property type="taxonomic scope" value="Bacteria"/>
</dbReference>
<dbReference type="HOGENOM" id="CLU_055599_1_0_5"/>
<dbReference type="Proteomes" id="UP000001943">
    <property type="component" value="Chromosome"/>
</dbReference>
<dbReference type="GO" id="GO:0005737">
    <property type="term" value="C:cytoplasm"/>
    <property type="evidence" value="ECO:0007669"/>
    <property type="project" value="UniProtKB-SubCell"/>
</dbReference>
<dbReference type="GO" id="GO:0048476">
    <property type="term" value="C:Holliday junction resolvase complex"/>
    <property type="evidence" value="ECO:0007669"/>
    <property type="project" value="UniProtKB-UniRule"/>
</dbReference>
<dbReference type="GO" id="GO:0005524">
    <property type="term" value="F:ATP binding"/>
    <property type="evidence" value="ECO:0007669"/>
    <property type="project" value="UniProtKB-UniRule"/>
</dbReference>
<dbReference type="GO" id="GO:0016887">
    <property type="term" value="F:ATP hydrolysis activity"/>
    <property type="evidence" value="ECO:0007669"/>
    <property type="project" value="InterPro"/>
</dbReference>
<dbReference type="GO" id="GO:0000400">
    <property type="term" value="F:four-way junction DNA binding"/>
    <property type="evidence" value="ECO:0007669"/>
    <property type="project" value="UniProtKB-UniRule"/>
</dbReference>
<dbReference type="GO" id="GO:0009378">
    <property type="term" value="F:four-way junction helicase activity"/>
    <property type="evidence" value="ECO:0007669"/>
    <property type="project" value="InterPro"/>
</dbReference>
<dbReference type="GO" id="GO:0006310">
    <property type="term" value="P:DNA recombination"/>
    <property type="evidence" value="ECO:0007669"/>
    <property type="project" value="UniProtKB-UniRule"/>
</dbReference>
<dbReference type="GO" id="GO:0006281">
    <property type="term" value="P:DNA repair"/>
    <property type="evidence" value="ECO:0007669"/>
    <property type="project" value="UniProtKB-UniRule"/>
</dbReference>
<dbReference type="CDD" id="cd00009">
    <property type="entry name" value="AAA"/>
    <property type="match status" value="1"/>
</dbReference>
<dbReference type="Gene3D" id="1.10.8.60">
    <property type="match status" value="1"/>
</dbReference>
<dbReference type="Gene3D" id="3.40.50.300">
    <property type="entry name" value="P-loop containing nucleotide triphosphate hydrolases"/>
    <property type="match status" value="1"/>
</dbReference>
<dbReference type="Gene3D" id="1.10.10.10">
    <property type="entry name" value="Winged helix-like DNA-binding domain superfamily/Winged helix DNA-binding domain"/>
    <property type="match status" value="1"/>
</dbReference>
<dbReference type="HAMAP" id="MF_00016">
    <property type="entry name" value="DNA_HJ_migration_RuvB"/>
    <property type="match status" value="1"/>
</dbReference>
<dbReference type="InterPro" id="IPR003593">
    <property type="entry name" value="AAA+_ATPase"/>
</dbReference>
<dbReference type="InterPro" id="IPR041445">
    <property type="entry name" value="AAA_lid_4"/>
</dbReference>
<dbReference type="InterPro" id="IPR004605">
    <property type="entry name" value="DNA_helicase_Holl-junc_RuvB"/>
</dbReference>
<dbReference type="InterPro" id="IPR027417">
    <property type="entry name" value="P-loop_NTPase"/>
</dbReference>
<dbReference type="InterPro" id="IPR008824">
    <property type="entry name" value="RuvB-like_N"/>
</dbReference>
<dbReference type="InterPro" id="IPR008823">
    <property type="entry name" value="RuvB_C"/>
</dbReference>
<dbReference type="InterPro" id="IPR036388">
    <property type="entry name" value="WH-like_DNA-bd_sf"/>
</dbReference>
<dbReference type="InterPro" id="IPR036390">
    <property type="entry name" value="WH_DNA-bd_sf"/>
</dbReference>
<dbReference type="NCBIfam" id="NF000868">
    <property type="entry name" value="PRK00080.1"/>
    <property type="match status" value="1"/>
</dbReference>
<dbReference type="NCBIfam" id="TIGR00635">
    <property type="entry name" value="ruvB"/>
    <property type="match status" value="1"/>
</dbReference>
<dbReference type="PANTHER" id="PTHR42848">
    <property type="match status" value="1"/>
</dbReference>
<dbReference type="PANTHER" id="PTHR42848:SF1">
    <property type="entry name" value="HOLLIDAY JUNCTION BRANCH MIGRATION COMPLEX SUBUNIT RUVB"/>
    <property type="match status" value="1"/>
</dbReference>
<dbReference type="Pfam" id="PF17864">
    <property type="entry name" value="AAA_lid_4"/>
    <property type="match status" value="1"/>
</dbReference>
<dbReference type="Pfam" id="PF05491">
    <property type="entry name" value="RuvB_C"/>
    <property type="match status" value="1"/>
</dbReference>
<dbReference type="Pfam" id="PF05496">
    <property type="entry name" value="RuvB_N"/>
    <property type="match status" value="1"/>
</dbReference>
<dbReference type="SMART" id="SM00382">
    <property type="entry name" value="AAA"/>
    <property type="match status" value="1"/>
</dbReference>
<dbReference type="SUPFAM" id="SSF52540">
    <property type="entry name" value="P-loop containing nucleoside triphosphate hydrolases"/>
    <property type="match status" value="1"/>
</dbReference>
<dbReference type="SUPFAM" id="SSF46785">
    <property type="entry name" value="Winged helix' DNA-binding domain"/>
    <property type="match status" value="1"/>
</dbReference>
<organism>
    <name type="scientific">Anaplasma phagocytophilum (strain HZ)</name>
    <dbReference type="NCBI Taxonomy" id="212042"/>
    <lineage>
        <taxon>Bacteria</taxon>
        <taxon>Pseudomonadati</taxon>
        <taxon>Pseudomonadota</taxon>
        <taxon>Alphaproteobacteria</taxon>
        <taxon>Rickettsiales</taxon>
        <taxon>Anaplasmataceae</taxon>
        <taxon>Anaplasma</taxon>
        <taxon>phagocytophilum group</taxon>
    </lineage>
</organism>
<reference key="1">
    <citation type="journal article" date="2006" name="PLoS Genet.">
        <title>Comparative genomics of emerging human ehrlichiosis agents.</title>
        <authorList>
            <person name="Dunning Hotopp J.C."/>
            <person name="Lin M."/>
            <person name="Madupu R."/>
            <person name="Crabtree J."/>
            <person name="Angiuoli S.V."/>
            <person name="Eisen J.A."/>
            <person name="Seshadri R."/>
            <person name="Ren Q."/>
            <person name="Wu M."/>
            <person name="Utterback T.R."/>
            <person name="Smith S."/>
            <person name="Lewis M."/>
            <person name="Khouri H."/>
            <person name="Zhang C."/>
            <person name="Niu H."/>
            <person name="Lin Q."/>
            <person name="Ohashi N."/>
            <person name="Zhi N."/>
            <person name="Nelson W.C."/>
            <person name="Brinkac L.M."/>
            <person name="Dodson R.J."/>
            <person name="Rosovitz M.J."/>
            <person name="Sundaram J.P."/>
            <person name="Daugherty S.C."/>
            <person name="Davidsen T."/>
            <person name="Durkin A.S."/>
            <person name="Gwinn M.L."/>
            <person name="Haft D.H."/>
            <person name="Selengut J.D."/>
            <person name="Sullivan S.A."/>
            <person name="Zafar N."/>
            <person name="Zhou L."/>
            <person name="Benahmed F."/>
            <person name="Forberger H."/>
            <person name="Halpin R."/>
            <person name="Mulligan S."/>
            <person name="Robinson J."/>
            <person name="White O."/>
            <person name="Rikihisa Y."/>
            <person name="Tettelin H."/>
        </authorList>
    </citation>
    <scope>NUCLEOTIDE SEQUENCE [LARGE SCALE GENOMIC DNA]</scope>
    <source>
        <strain>HZ</strain>
    </source>
</reference>
<protein>
    <recommendedName>
        <fullName evidence="1">Holliday junction branch migration complex subunit RuvB</fullName>
        <ecNumber evidence="1">3.6.4.-</ecNumber>
    </recommendedName>
</protein>
<proteinExistence type="inferred from homology"/>
<keyword id="KW-0067">ATP-binding</keyword>
<keyword id="KW-0963">Cytoplasm</keyword>
<keyword id="KW-0227">DNA damage</keyword>
<keyword id="KW-0233">DNA recombination</keyword>
<keyword id="KW-0234">DNA repair</keyword>
<keyword id="KW-0238">DNA-binding</keyword>
<keyword id="KW-0378">Hydrolase</keyword>
<keyword id="KW-0547">Nucleotide-binding</keyword>
<sequence length="329" mass="37035">MNELLHQHKAIPEDERNFALRPSLIEEFVGQSEIIENLKVFIKSAYERRATLDHVLLYGPPGLGKTTLAHIIAKELKVSLRSTSGPLLSKAGDLAAILTNLQPMDVLFIDEIHRLHRNIEEILYSAMEDCCLDIVVGEGCGARTLRIDLPAFTLVGATTRFGLISNPLRDRFGIPLHLEFYSVEELMLVIKRAAHVICTDIDDSGAYEIASRSRGTPRIALRLFRRVRDFMVVERQSIIDNHFADSALFNLGVDKSGLDKMDIKYLSFIYEAKNAVGIETIAAALSEDVGNIEETIEPYLLKIGFIQRTPRGRILTTKAIEHLMNYKYI</sequence>
<accession>Q2GLG1</accession>
<evidence type="ECO:0000255" key="1">
    <source>
        <dbReference type="HAMAP-Rule" id="MF_00016"/>
    </source>
</evidence>
<feature type="chain" id="PRO_0000322781" description="Holliday junction branch migration complex subunit RuvB">
    <location>
        <begin position="1"/>
        <end position="329"/>
    </location>
</feature>
<feature type="region of interest" description="Large ATPase domain (RuvB-L)" evidence="1">
    <location>
        <begin position="1"/>
        <end position="181"/>
    </location>
</feature>
<feature type="region of interest" description="Small ATPAse domain (RuvB-S)" evidence="1">
    <location>
        <begin position="182"/>
        <end position="252"/>
    </location>
</feature>
<feature type="region of interest" description="Head domain (RuvB-H)" evidence="1">
    <location>
        <begin position="255"/>
        <end position="329"/>
    </location>
</feature>
<feature type="binding site" evidence="1">
    <location>
        <position position="20"/>
    </location>
    <ligand>
        <name>ATP</name>
        <dbReference type="ChEBI" id="CHEBI:30616"/>
    </ligand>
</feature>
<feature type="binding site" evidence="1">
    <location>
        <position position="21"/>
    </location>
    <ligand>
        <name>ATP</name>
        <dbReference type="ChEBI" id="CHEBI:30616"/>
    </ligand>
</feature>
<feature type="binding site" evidence="1">
    <location>
        <position position="62"/>
    </location>
    <ligand>
        <name>ATP</name>
        <dbReference type="ChEBI" id="CHEBI:30616"/>
    </ligand>
</feature>
<feature type="binding site" evidence="1">
    <location>
        <position position="65"/>
    </location>
    <ligand>
        <name>ATP</name>
        <dbReference type="ChEBI" id="CHEBI:30616"/>
    </ligand>
</feature>
<feature type="binding site" evidence="1">
    <location>
        <position position="66"/>
    </location>
    <ligand>
        <name>ATP</name>
        <dbReference type="ChEBI" id="CHEBI:30616"/>
    </ligand>
</feature>
<feature type="binding site" evidence="1">
    <location>
        <position position="66"/>
    </location>
    <ligand>
        <name>Mg(2+)</name>
        <dbReference type="ChEBI" id="CHEBI:18420"/>
    </ligand>
</feature>
<feature type="binding site" evidence="1">
    <location>
        <position position="67"/>
    </location>
    <ligand>
        <name>ATP</name>
        <dbReference type="ChEBI" id="CHEBI:30616"/>
    </ligand>
</feature>
<feature type="binding site" evidence="1">
    <location>
        <position position="171"/>
    </location>
    <ligand>
        <name>ATP</name>
        <dbReference type="ChEBI" id="CHEBI:30616"/>
    </ligand>
</feature>
<feature type="binding site" evidence="1">
    <location>
        <position position="181"/>
    </location>
    <ligand>
        <name>ATP</name>
        <dbReference type="ChEBI" id="CHEBI:30616"/>
    </ligand>
</feature>
<feature type="binding site" evidence="1">
    <location>
        <position position="218"/>
    </location>
    <ligand>
        <name>ATP</name>
        <dbReference type="ChEBI" id="CHEBI:30616"/>
    </ligand>
</feature>
<feature type="binding site" evidence="1">
    <location>
        <position position="308"/>
    </location>
    <ligand>
        <name>DNA</name>
        <dbReference type="ChEBI" id="CHEBI:16991"/>
    </ligand>
</feature>
<feature type="binding site" evidence="1">
    <location>
        <position position="313"/>
    </location>
    <ligand>
        <name>DNA</name>
        <dbReference type="ChEBI" id="CHEBI:16991"/>
    </ligand>
</feature>
<comment type="function">
    <text evidence="1">The RuvA-RuvB-RuvC complex processes Holliday junction (HJ) DNA during genetic recombination and DNA repair, while the RuvA-RuvB complex plays an important role in the rescue of blocked DNA replication forks via replication fork reversal (RFR). RuvA specifically binds to HJ cruciform DNA, conferring on it an open structure. The RuvB hexamer acts as an ATP-dependent pump, pulling dsDNA into and through the RuvAB complex. RuvB forms 2 homohexamers on either side of HJ DNA bound by 1 or 2 RuvA tetramers; 4 subunits per hexamer contact DNA at a time. Coordinated motions by a converter formed by DNA-disengaged RuvB subunits stimulates ATP hydrolysis and nucleotide exchange. Immobilization of the converter enables RuvB to convert the ATP-contained energy into a lever motion, pulling 2 nucleotides of DNA out of the RuvA tetramer per ATP hydrolyzed, thus driving DNA branch migration. The RuvB motors rotate together with the DNA substrate, which together with the progressing nucleotide cycle form the mechanistic basis for DNA recombination by continuous HJ branch migration. Branch migration allows RuvC to scan DNA until it finds its consensus sequence, where it cleaves and resolves cruciform DNA.</text>
</comment>
<comment type="catalytic activity">
    <reaction evidence="1">
        <text>ATP + H2O = ADP + phosphate + H(+)</text>
        <dbReference type="Rhea" id="RHEA:13065"/>
        <dbReference type="ChEBI" id="CHEBI:15377"/>
        <dbReference type="ChEBI" id="CHEBI:15378"/>
        <dbReference type="ChEBI" id="CHEBI:30616"/>
        <dbReference type="ChEBI" id="CHEBI:43474"/>
        <dbReference type="ChEBI" id="CHEBI:456216"/>
    </reaction>
</comment>
<comment type="subunit">
    <text evidence="1">Homohexamer. Forms an RuvA(8)-RuvB(12)-Holliday junction (HJ) complex. HJ DNA is sandwiched between 2 RuvA tetramers; dsDNA enters through RuvA and exits via RuvB. An RuvB hexamer assembles on each DNA strand where it exits the tetramer. Each RuvB hexamer is contacted by two RuvA subunits (via domain III) on 2 adjacent RuvB subunits; this complex drives branch migration. In the full resolvosome a probable DNA-RuvA(4)-RuvB(12)-RuvC(2) complex forms which resolves the HJ.</text>
</comment>
<comment type="subcellular location">
    <subcellularLocation>
        <location evidence="1">Cytoplasm</location>
    </subcellularLocation>
</comment>
<comment type="domain">
    <text evidence="1">Has 3 domains, the large (RuvB-L) and small ATPase (RuvB-S) domains and the C-terminal head (RuvB-H) domain. The head domain binds DNA, while the ATPase domains jointly bind ATP, ADP or are empty depending on the state of the subunit in the translocation cycle. During a single DNA translocation step the structure of each domain remains the same, but their relative positions change.</text>
</comment>
<comment type="similarity">
    <text evidence="1">Belongs to the RuvB family.</text>
</comment>
<name>RUVB_ANAPZ</name>
<gene>
    <name evidence="1" type="primary">ruvB</name>
    <name type="ordered locus">APH_0166</name>
</gene>